<accession>B4PV71</accession>
<proteinExistence type="inferred from homology"/>
<comment type="function">
    <text evidence="1">Bifunctional enzyme that catalyzes the enolization of 2,3-diketo-5-methylthiopentyl-1-phosphate (DK-MTP-1-P) into the intermediate 2-hydroxy-3-keto-5-methylthiopentenyl-1-phosphate (HK-MTPenyl-1-P), which is then dephosphorylated to form the acireductone 1,2-dihydroxy-3-keto-5-methylthiopentene (DHK-MTPene).</text>
</comment>
<comment type="catalytic activity">
    <reaction evidence="1">
        <text>5-methylsulfanyl-2,3-dioxopentyl phosphate + H2O = 1,2-dihydroxy-5-(methylsulfanyl)pent-1-en-3-one + phosphate</text>
        <dbReference type="Rhea" id="RHEA:21700"/>
        <dbReference type="ChEBI" id="CHEBI:15377"/>
        <dbReference type="ChEBI" id="CHEBI:43474"/>
        <dbReference type="ChEBI" id="CHEBI:49252"/>
        <dbReference type="ChEBI" id="CHEBI:58828"/>
        <dbReference type="EC" id="3.1.3.77"/>
    </reaction>
</comment>
<comment type="cofactor">
    <cofactor evidence="1">
        <name>Mg(2+)</name>
        <dbReference type="ChEBI" id="CHEBI:18420"/>
    </cofactor>
    <text evidence="1">Binds 1 Mg(2+) ion per subunit.</text>
</comment>
<comment type="pathway">
    <text evidence="1">Amino-acid biosynthesis; L-methionine biosynthesis via salvage pathway; L-methionine from S-methyl-5-thio-alpha-D-ribose 1-phosphate: step 3/6.</text>
</comment>
<comment type="pathway">
    <text evidence="1">Amino-acid biosynthesis; L-methionine biosynthesis via salvage pathway; L-methionine from S-methyl-5-thio-alpha-D-ribose 1-phosphate: step 4/6.</text>
</comment>
<comment type="subunit">
    <text evidence="1">Monomer.</text>
</comment>
<comment type="subcellular location">
    <subcellularLocation>
        <location evidence="1">Cytoplasm</location>
    </subcellularLocation>
    <subcellularLocation>
        <location evidence="1">Nucleus</location>
    </subcellularLocation>
</comment>
<comment type="similarity">
    <text evidence="1">Belongs to the HAD-like hydrolase superfamily. MasA/MtnC family.</text>
</comment>
<gene>
    <name type="ORF">GE25301</name>
</gene>
<dbReference type="EC" id="3.1.3.77" evidence="1"/>
<dbReference type="EMBL" id="CM000160">
    <property type="protein sequence ID" value="EDW95740.1"/>
    <property type="molecule type" value="Genomic_DNA"/>
</dbReference>
<dbReference type="RefSeq" id="XP_002096028.1">
    <property type="nucleotide sequence ID" value="XM_002095992.2"/>
</dbReference>
<dbReference type="SMR" id="B4PV71"/>
<dbReference type="EnsemblMetazoa" id="FBtr0271819">
    <property type="protein sequence ID" value="FBpp0270311"/>
    <property type="gene ID" value="FBgn0242381"/>
</dbReference>
<dbReference type="EnsemblMetazoa" id="FBtr0402253">
    <property type="protein sequence ID" value="FBpp0361113"/>
    <property type="gene ID" value="FBgn0242381"/>
</dbReference>
<dbReference type="EnsemblMetazoa" id="XM_015191611.2">
    <property type="protein sequence ID" value="XP_015047097.1"/>
    <property type="gene ID" value="LOC6535378"/>
</dbReference>
<dbReference type="GeneID" id="6535378"/>
<dbReference type="KEGG" id="dya:Dyak_GE25301"/>
<dbReference type="CTD" id="40630"/>
<dbReference type="eggNOG" id="KOG2630">
    <property type="taxonomic scope" value="Eukaryota"/>
</dbReference>
<dbReference type="HOGENOM" id="CLU_023273_0_0_1"/>
<dbReference type="OMA" id="LQGMVWE"/>
<dbReference type="OrthoDB" id="272500at2759"/>
<dbReference type="PhylomeDB" id="B4PV71"/>
<dbReference type="UniPathway" id="UPA00904">
    <property type="reaction ID" value="UER00876"/>
</dbReference>
<dbReference type="UniPathway" id="UPA00904">
    <property type="reaction ID" value="UER00877"/>
</dbReference>
<dbReference type="Proteomes" id="UP000002282">
    <property type="component" value="Chromosome 3R"/>
</dbReference>
<dbReference type="GO" id="GO:0005737">
    <property type="term" value="C:cytoplasm"/>
    <property type="evidence" value="ECO:0007669"/>
    <property type="project" value="UniProtKB-SubCell"/>
</dbReference>
<dbReference type="GO" id="GO:0005634">
    <property type="term" value="C:nucleus"/>
    <property type="evidence" value="ECO:0007669"/>
    <property type="project" value="UniProtKB-SubCell"/>
</dbReference>
<dbReference type="GO" id="GO:0043874">
    <property type="term" value="F:acireductone synthase activity"/>
    <property type="evidence" value="ECO:0007669"/>
    <property type="project" value="UniProtKB-EC"/>
</dbReference>
<dbReference type="GO" id="GO:0000287">
    <property type="term" value="F:magnesium ion binding"/>
    <property type="evidence" value="ECO:0007669"/>
    <property type="project" value="UniProtKB-UniRule"/>
</dbReference>
<dbReference type="GO" id="GO:0019509">
    <property type="term" value="P:L-methionine salvage from methylthioadenosine"/>
    <property type="evidence" value="ECO:0007669"/>
    <property type="project" value="UniProtKB-UniRule"/>
</dbReference>
<dbReference type="CDD" id="cd01629">
    <property type="entry name" value="HAD_EP"/>
    <property type="match status" value="1"/>
</dbReference>
<dbReference type="FunFam" id="1.10.720.60:FF:000007">
    <property type="entry name" value="Enolase-phosphatase E1"/>
    <property type="match status" value="1"/>
</dbReference>
<dbReference type="FunFam" id="3.40.50.1000:FF:000079">
    <property type="entry name" value="Enolase-phosphatase E1"/>
    <property type="match status" value="1"/>
</dbReference>
<dbReference type="Gene3D" id="1.10.720.60">
    <property type="match status" value="1"/>
</dbReference>
<dbReference type="Gene3D" id="3.40.50.1000">
    <property type="entry name" value="HAD superfamily/HAD-like"/>
    <property type="match status" value="1"/>
</dbReference>
<dbReference type="HAMAP" id="MF_01681">
    <property type="entry name" value="Salvage_MtnC"/>
    <property type="match status" value="1"/>
</dbReference>
<dbReference type="HAMAP" id="MF_03117">
    <property type="entry name" value="Salvage_MtnC_euk"/>
    <property type="match status" value="1"/>
</dbReference>
<dbReference type="InterPro" id="IPR023943">
    <property type="entry name" value="Enolase-ppase_E1"/>
</dbReference>
<dbReference type="InterPro" id="IPR027511">
    <property type="entry name" value="ENOPH1_eukaryotes"/>
</dbReference>
<dbReference type="InterPro" id="IPR036412">
    <property type="entry name" value="HAD-like_sf"/>
</dbReference>
<dbReference type="InterPro" id="IPR006439">
    <property type="entry name" value="HAD-SF_hydro_IA"/>
</dbReference>
<dbReference type="InterPro" id="IPR023214">
    <property type="entry name" value="HAD_sf"/>
</dbReference>
<dbReference type="NCBIfam" id="TIGR01691">
    <property type="entry name" value="enolase-ppase"/>
    <property type="match status" value="1"/>
</dbReference>
<dbReference type="PANTHER" id="PTHR20371">
    <property type="entry name" value="ENOLASE-PHOSPHATASE E1"/>
    <property type="match status" value="1"/>
</dbReference>
<dbReference type="PANTHER" id="PTHR20371:SF1">
    <property type="entry name" value="ENOLASE-PHOSPHATASE E1"/>
    <property type="match status" value="1"/>
</dbReference>
<dbReference type="Pfam" id="PF00702">
    <property type="entry name" value="Hydrolase"/>
    <property type="match status" value="1"/>
</dbReference>
<dbReference type="PRINTS" id="PR00413">
    <property type="entry name" value="HADHALOGNASE"/>
</dbReference>
<dbReference type="SFLD" id="SFLDG01133">
    <property type="entry name" value="C1.5.4:_Enolase-phosphatase_Li"/>
    <property type="match status" value="1"/>
</dbReference>
<dbReference type="SFLD" id="SFLDF00044">
    <property type="entry name" value="enolase-phosphatase"/>
    <property type="match status" value="1"/>
</dbReference>
<dbReference type="SUPFAM" id="SSF56784">
    <property type="entry name" value="HAD-like"/>
    <property type="match status" value="1"/>
</dbReference>
<name>ENOPH_DROYA</name>
<protein>
    <recommendedName>
        <fullName evidence="1">Enolase-phosphatase E1</fullName>
        <ecNumber evidence="1">3.1.3.77</ecNumber>
    </recommendedName>
    <alternativeName>
        <fullName evidence="1">2,3-diketo-5-methylthio-1-phosphopentane phosphatase</fullName>
    </alternativeName>
</protein>
<sequence>MTSSERVAKVVLVDIEGTTTSISFVHEVLFPYAKQNVEKFLRDSWKVDDIQRIVQDMQQLPQFEEYKVLLRAPPAEVDVELIAGFVRYLIDQDLKVTPMKTLQGLIWEQGYTNGELKGHVYEDVPAAFEAWRAAGLQIAVYSSGSVAAQKLIFGHSLVGNLQPHLSAYFDTHVGHKQDQKSYENIANLLKEDPKQILFLTDIPGEAAAARSAGLQAVILQRPGNAALADDQKASFELMPDFKSLQNLKLPINKYQA</sequence>
<evidence type="ECO:0000255" key="1">
    <source>
        <dbReference type="HAMAP-Rule" id="MF_03117"/>
    </source>
</evidence>
<reference key="1">
    <citation type="journal article" date="2007" name="Nature">
        <title>Evolution of genes and genomes on the Drosophila phylogeny.</title>
        <authorList>
            <consortium name="Drosophila 12 genomes consortium"/>
        </authorList>
    </citation>
    <scope>NUCLEOTIDE SEQUENCE [LARGE SCALE GENOMIC DNA]</scope>
    <source>
        <strain>Tai18E2 / Tucson 14021-0261.01</strain>
    </source>
</reference>
<organism>
    <name type="scientific">Drosophila yakuba</name>
    <name type="common">Fruit fly</name>
    <dbReference type="NCBI Taxonomy" id="7245"/>
    <lineage>
        <taxon>Eukaryota</taxon>
        <taxon>Metazoa</taxon>
        <taxon>Ecdysozoa</taxon>
        <taxon>Arthropoda</taxon>
        <taxon>Hexapoda</taxon>
        <taxon>Insecta</taxon>
        <taxon>Pterygota</taxon>
        <taxon>Neoptera</taxon>
        <taxon>Endopterygota</taxon>
        <taxon>Diptera</taxon>
        <taxon>Brachycera</taxon>
        <taxon>Muscomorpha</taxon>
        <taxon>Ephydroidea</taxon>
        <taxon>Drosophilidae</taxon>
        <taxon>Drosophila</taxon>
        <taxon>Sophophora</taxon>
    </lineage>
</organism>
<feature type="chain" id="PRO_0000393987" description="Enolase-phosphatase E1">
    <location>
        <begin position="1"/>
        <end position="256"/>
    </location>
</feature>
<feature type="binding site" evidence="1">
    <location>
        <position position="14"/>
    </location>
    <ligand>
        <name>Mg(2+)</name>
        <dbReference type="ChEBI" id="CHEBI:18420"/>
    </ligand>
</feature>
<feature type="binding site" evidence="1">
    <location>
        <position position="16"/>
    </location>
    <ligand>
        <name>Mg(2+)</name>
        <dbReference type="ChEBI" id="CHEBI:18420"/>
    </ligand>
</feature>
<feature type="binding site" evidence="1">
    <location>
        <begin position="142"/>
        <end position="143"/>
    </location>
    <ligand>
        <name>substrate</name>
    </ligand>
</feature>
<feature type="binding site" evidence="1">
    <location>
        <position position="176"/>
    </location>
    <ligand>
        <name>substrate</name>
    </ligand>
</feature>
<feature type="binding site" evidence="1">
    <location>
        <position position="201"/>
    </location>
    <ligand>
        <name>Mg(2+)</name>
        <dbReference type="ChEBI" id="CHEBI:18420"/>
    </ligand>
</feature>
<keyword id="KW-0028">Amino-acid biosynthesis</keyword>
<keyword id="KW-0963">Cytoplasm</keyword>
<keyword id="KW-0378">Hydrolase</keyword>
<keyword id="KW-0460">Magnesium</keyword>
<keyword id="KW-0479">Metal-binding</keyword>
<keyword id="KW-0486">Methionine biosynthesis</keyword>
<keyword id="KW-0539">Nucleus</keyword>